<evidence type="ECO:0000255" key="1">
    <source>
        <dbReference type="HAMAP-Rule" id="MF_01389"/>
    </source>
</evidence>
<accession>Q12DU6</accession>
<sequence length="218" mass="23317">MSLHHIANRTKKLPPLRVGIGGPVGSGKTTLLEMLCKAMKNKYDLVAITNDIYTKEDQRLLTVSGALAAERIMGVETGGCPHTAIREDASINLEAIDRMLVDFPDADVVFVESGGDNLAATFSPELSDLTIYVIDVAAGEKIPRKGGPGITKSDLFVINKTDLAPYVGADLGVMEADTIRMRTTPKGLKPFVMTNLKTNTGLAEVIAFIETKGMLQAG</sequence>
<comment type="function">
    <text evidence="1">Facilitates the functional incorporation of the urease nickel metallocenter. This process requires GTP hydrolysis, probably effectuated by UreG.</text>
</comment>
<comment type="subunit">
    <text evidence="1">Homodimer. UreD, UreF and UreG form a complex that acts as a GTP-hydrolysis-dependent molecular chaperone, activating the urease apoprotein by helping to assemble the nickel containing metallocenter of UreC. The UreE protein probably delivers the nickel.</text>
</comment>
<comment type="subcellular location">
    <subcellularLocation>
        <location evidence="1">Cytoplasm</location>
    </subcellularLocation>
</comment>
<comment type="similarity">
    <text evidence="1">Belongs to the SIMIBI class G3E GTPase family. UreG subfamily.</text>
</comment>
<dbReference type="EMBL" id="CP000316">
    <property type="protein sequence ID" value="ABE43296.1"/>
    <property type="molecule type" value="Genomic_DNA"/>
</dbReference>
<dbReference type="RefSeq" id="WP_011482295.1">
    <property type="nucleotide sequence ID" value="NC_007948.1"/>
</dbReference>
<dbReference type="SMR" id="Q12DU6"/>
<dbReference type="STRING" id="296591.Bpro_1347"/>
<dbReference type="KEGG" id="pol:Bpro_1347"/>
<dbReference type="eggNOG" id="COG0378">
    <property type="taxonomic scope" value="Bacteria"/>
</dbReference>
<dbReference type="HOGENOM" id="CLU_072144_1_0_4"/>
<dbReference type="OrthoDB" id="9802035at2"/>
<dbReference type="Proteomes" id="UP000001983">
    <property type="component" value="Chromosome"/>
</dbReference>
<dbReference type="GO" id="GO:0005737">
    <property type="term" value="C:cytoplasm"/>
    <property type="evidence" value="ECO:0007669"/>
    <property type="project" value="UniProtKB-SubCell"/>
</dbReference>
<dbReference type="GO" id="GO:0005525">
    <property type="term" value="F:GTP binding"/>
    <property type="evidence" value="ECO:0007669"/>
    <property type="project" value="UniProtKB-KW"/>
</dbReference>
<dbReference type="GO" id="GO:0003924">
    <property type="term" value="F:GTPase activity"/>
    <property type="evidence" value="ECO:0007669"/>
    <property type="project" value="InterPro"/>
</dbReference>
<dbReference type="GO" id="GO:0016151">
    <property type="term" value="F:nickel cation binding"/>
    <property type="evidence" value="ECO:0007669"/>
    <property type="project" value="UniProtKB-UniRule"/>
</dbReference>
<dbReference type="GO" id="GO:0043419">
    <property type="term" value="P:urea catabolic process"/>
    <property type="evidence" value="ECO:0007669"/>
    <property type="project" value="InterPro"/>
</dbReference>
<dbReference type="CDD" id="cd05540">
    <property type="entry name" value="UreG"/>
    <property type="match status" value="1"/>
</dbReference>
<dbReference type="FunFam" id="3.40.50.300:FF:000208">
    <property type="entry name" value="Urease accessory protein UreG"/>
    <property type="match status" value="1"/>
</dbReference>
<dbReference type="Gene3D" id="3.40.50.300">
    <property type="entry name" value="P-loop containing nucleotide triphosphate hydrolases"/>
    <property type="match status" value="1"/>
</dbReference>
<dbReference type="HAMAP" id="MF_01389">
    <property type="entry name" value="UreG"/>
    <property type="match status" value="1"/>
</dbReference>
<dbReference type="InterPro" id="IPR003495">
    <property type="entry name" value="CobW/HypB/UreG_nucleotide-bd"/>
</dbReference>
<dbReference type="InterPro" id="IPR027417">
    <property type="entry name" value="P-loop_NTPase"/>
</dbReference>
<dbReference type="InterPro" id="IPR004400">
    <property type="entry name" value="UreG"/>
</dbReference>
<dbReference type="NCBIfam" id="TIGR00101">
    <property type="entry name" value="ureG"/>
    <property type="match status" value="1"/>
</dbReference>
<dbReference type="PANTHER" id="PTHR31715">
    <property type="entry name" value="UREASE ACCESSORY PROTEIN G"/>
    <property type="match status" value="1"/>
</dbReference>
<dbReference type="PANTHER" id="PTHR31715:SF0">
    <property type="entry name" value="UREASE ACCESSORY PROTEIN G"/>
    <property type="match status" value="1"/>
</dbReference>
<dbReference type="Pfam" id="PF02492">
    <property type="entry name" value="cobW"/>
    <property type="match status" value="1"/>
</dbReference>
<dbReference type="PIRSF" id="PIRSF005624">
    <property type="entry name" value="Ni-bind_GTPase"/>
    <property type="match status" value="1"/>
</dbReference>
<dbReference type="SUPFAM" id="SSF52540">
    <property type="entry name" value="P-loop containing nucleoside triphosphate hydrolases"/>
    <property type="match status" value="1"/>
</dbReference>
<protein>
    <recommendedName>
        <fullName evidence="1">Urease accessory protein UreG</fullName>
    </recommendedName>
</protein>
<reference key="1">
    <citation type="journal article" date="2008" name="Appl. Environ. Microbiol.">
        <title>The genome of Polaromonas sp. strain JS666: insights into the evolution of a hydrocarbon- and xenobiotic-degrading bacterium, and features of relevance to biotechnology.</title>
        <authorList>
            <person name="Mattes T.E."/>
            <person name="Alexander A.K."/>
            <person name="Richardson P.M."/>
            <person name="Munk A.C."/>
            <person name="Han C.S."/>
            <person name="Stothard P."/>
            <person name="Coleman N.V."/>
        </authorList>
    </citation>
    <scope>NUCLEOTIDE SEQUENCE [LARGE SCALE GENOMIC DNA]</scope>
    <source>
        <strain>JS666 / ATCC BAA-500</strain>
    </source>
</reference>
<proteinExistence type="inferred from homology"/>
<feature type="chain" id="PRO_0000347413" description="Urease accessory protein UreG">
    <location>
        <begin position="1"/>
        <end position="218"/>
    </location>
</feature>
<feature type="binding site" evidence="1">
    <location>
        <begin position="22"/>
        <end position="29"/>
    </location>
    <ligand>
        <name>GTP</name>
        <dbReference type="ChEBI" id="CHEBI:37565"/>
    </ligand>
</feature>
<organism>
    <name type="scientific">Polaromonas sp. (strain JS666 / ATCC BAA-500)</name>
    <dbReference type="NCBI Taxonomy" id="296591"/>
    <lineage>
        <taxon>Bacteria</taxon>
        <taxon>Pseudomonadati</taxon>
        <taxon>Pseudomonadota</taxon>
        <taxon>Betaproteobacteria</taxon>
        <taxon>Burkholderiales</taxon>
        <taxon>Comamonadaceae</taxon>
        <taxon>Polaromonas</taxon>
    </lineage>
</organism>
<name>UREG_POLSJ</name>
<keyword id="KW-0143">Chaperone</keyword>
<keyword id="KW-0963">Cytoplasm</keyword>
<keyword id="KW-0342">GTP-binding</keyword>
<keyword id="KW-0996">Nickel insertion</keyword>
<keyword id="KW-0547">Nucleotide-binding</keyword>
<keyword id="KW-1185">Reference proteome</keyword>
<gene>
    <name evidence="1" type="primary">ureG</name>
    <name type="ordered locus">Bpro_1347</name>
</gene>